<accession>A9KT32</accession>
<sequence length="753" mass="87173">MNWTLTNSSLDKDSITSNGNRFLIGNGYLGIRGTLEEYRKEYFPAINLAGIYDQVGEGWREPLNAPNALYTRIEVDEVEYQLPKIEPRYHELSLDYRHGILDRQTVWASNKGTIIVKSSRFASMKEKHLVVLNYSITADYDCEIIVYTGIDGSVWDIHGPHYDKVEFQKQLLRHNETEILNEKYLLESESKWNGHRLSIAAQTHENKDIVYVTEDIICNKEAKIELIESDKECLRKLTFHGKAKEEINFTKYITVFTSKDCVDYKEQSIKIVNHAKDTGYERLQEEHKNVWEQLWNISEVTIEGDDEANDALNYSLYHLHCIAPRHSKSLSIAARGLSGQTYKGAVFWDTEMFMLDFFLYTQPEVAKTLLRYRIDTLEGAKKKAKLYGYEGAFYAWESQEGGYDACSDYNVTDVFTKRPMRTYFKDKQVHISSAIVYGIRSYLNYTNDFSILAEGGAETILECAKFYYSLLEKKIGKEYYEIHDVIGPDEYHERVNNNAYTNRMAKLTFETAIDILDHEKNKDEEFYIKLLKQYEIKDLLDKLKDACNKLYIPKPKDNSDLIEQFDGFFELEDVSLEEVRSRLLHEKEYWGGAYGVASHTQVIKQADVVTMLVLFKEEYQREVLQQNLNYYEPRTEHGSSLSACMYSLLYCMCDQPQYAYPFFMKSALADWNGKGKEWAGLVYIGGTHPAAAGGAYMTAIKGFGGFQIENGVIKATPRLPKHWVRLKYRVLYQGAIYEIDASKEQVSISKIEM</sequence>
<feature type="chain" id="PRO_0000418723" description="Nigerose phosphorylase">
    <location>
        <begin position="1"/>
        <end position="753"/>
    </location>
</feature>
<feature type="active site" description="Proton donor" evidence="1">
    <location>
        <position position="490"/>
    </location>
</feature>
<feature type="binding site" evidence="1">
    <location>
        <begin position="348"/>
        <end position="349"/>
    </location>
    <ligand>
        <name>substrate</name>
    </ligand>
</feature>
<feature type="binding site" evidence="1">
    <location>
        <begin position="604"/>
        <end position="605"/>
    </location>
    <ligand>
        <name>substrate</name>
    </ligand>
</feature>
<proteinExistence type="evidence at protein level"/>
<reference key="1">
    <citation type="submission" date="2007-11" db="EMBL/GenBank/DDBJ databases">
        <title>Complete genome sequence of Clostridium phytofermentans ISDg.</title>
        <authorList>
            <person name="Leschine S.B."/>
            <person name="Warnick T.A."/>
            <person name="Blanchard J.L."/>
            <person name="Schnell D.J."/>
            <person name="Petit E.L."/>
            <person name="LaTouf W.G."/>
            <person name="Copeland A."/>
            <person name="Lucas S."/>
            <person name="Lapidus A."/>
            <person name="Barry K."/>
            <person name="Glavina del Rio T."/>
            <person name="Dalin E."/>
            <person name="Tice H."/>
            <person name="Pitluck S."/>
            <person name="Kiss H."/>
            <person name="Brettin T."/>
            <person name="Bruce D."/>
            <person name="Detter J.C."/>
            <person name="Han C."/>
            <person name="Kuske C."/>
            <person name="Schmutz J."/>
            <person name="Larimer F."/>
            <person name="Land M."/>
            <person name="Hauser L."/>
            <person name="Kyrpides N."/>
            <person name="Kim E.A."/>
            <person name="Richardson P."/>
        </authorList>
    </citation>
    <scope>NUCLEOTIDE SEQUENCE [LARGE SCALE GENOMIC DNA]</scope>
    <source>
        <strain>ATCC 700394 / DSM 18823 / ISDg</strain>
    </source>
</reference>
<reference key="2">
    <citation type="journal article" date="2012" name="Appl. Microbiol. Biotechnol.">
        <title>Discovery of nigerose phosphorylase from Clostridium phytofermentans.</title>
        <authorList>
            <person name="Nihira T."/>
            <person name="Nakai H."/>
            <person name="Chiku K."/>
            <person name="Kitaoka M."/>
        </authorList>
    </citation>
    <scope>FUNCTION</scope>
    <scope>CATALYTIC ACTIVITY</scope>
    <scope>ACTIVITY REGULATION</scope>
    <scope>BIOPHYSICOCHEMICAL PROPERTIES</scope>
    <scope>SUBUNIT</scope>
    <scope>SUBCELLULAR LOCATION</scope>
    <source>
        <strain>ATCC 700394 / DSM 18823 / ISDg</strain>
    </source>
</reference>
<comment type="function">
    <text evidence="2">Catalyzes the reversible phosphorolysis of nigerose. Also shows a weak activity on kojibiose.</text>
</comment>
<comment type="catalytic activity">
    <reaction evidence="2">
        <text>nigerose + phosphate = beta-D-glucose 1-phosphate + D-glucose</text>
        <dbReference type="Rhea" id="RHEA:32523"/>
        <dbReference type="ChEBI" id="CHEBI:4167"/>
        <dbReference type="ChEBI" id="CHEBI:7570"/>
        <dbReference type="ChEBI" id="CHEBI:43474"/>
        <dbReference type="ChEBI" id="CHEBI:57684"/>
        <dbReference type="EC" id="2.4.1.279"/>
    </reaction>
</comment>
<comment type="activity regulation">
    <text evidence="2">Does not require divalent metal ions.</text>
</comment>
<comment type="biophysicochemical properties">
    <kinetics>
        <KM evidence="2">1.7 mM for nigerose</KM>
        <KM evidence="2">0.2 mM for phosphate</KM>
        <KM evidence="2">3.3 mM for D-glucose</KM>
        <text>kcat is 67 sec(-1) for nigerose. kcat is 110 sec(-1) for D-glucose.</text>
    </kinetics>
    <phDependence>
        <text evidence="2">Optimum pH is 7.0.</text>
    </phDependence>
    <temperatureDependence>
        <text evidence="2">Optimum temperature is 40 degrees Celsius.</text>
    </temperatureDependence>
</comment>
<comment type="subunit">
    <text evidence="2">Homodimer.</text>
</comment>
<comment type="subcellular location">
    <subcellularLocation>
        <location evidence="4">Cytoplasm</location>
    </subcellularLocation>
</comment>
<comment type="similarity">
    <text evidence="3">Belongs to the glycosyl hydrolase 65 family.</text>
</comment>
<keyword id="KW-0963">Cytoplasm</keyword>
<keyword id="KW-0328">Glycosyltransferase</keyword>
<keyword id="KW-1185">Reference proteome</keyword>
<keyword id="KW-0808">Transferase</keyword>
<organism>
    <name type="scientific">Lachnoclostridium phytofermentans (strain ATCC 700394 / DSM 18823 / ISDg)</name>
    <name type="common">Clostridium phytofermentans</name>
    <dbReference type="NCBI Taxonomy" id="357809"/>
    <lineage>
        <taxon>Bacteria</taxon>
        <taxon>Bacillati</taxon>
        <taxon>Bacillota</taxon>
        <taxon>Clostridia</taxon>
        <taxon>Lachnospirales</taxon>
        <taxon>Lachnospiraceae</taxon>
    </lineage>
</organism>
<gene>
    <name type="ordered locus">Cphy_1874</name>
</gene>
<protein>
    <recommendedName>
        <fullName>Nigerose phosphorylase</fullName>
        <ecNumber evidence="2">2.4.1.279</ecNumber>
    </recommendedName>
</protein>
<name>NIGP_LACP7</name>
<evidence type="ECO:0000250" key="1">
    <source>
        <dbReference type="UniProtKB" id="D6XZ22"/>
    </source>
</evidence>
<evidence type="ECO:0000269" key="2">
    <source>
    </source>
</evidence>
<evidence type="ECO:0000305" key="3"/>
<evidence type="ECO:0000305" key="4">
    <source>
    </source>
</evidence>
<dbReference type="EC" id="2.4.1.279" evidence="2"/>
<dbReference type="EMBL" id="CP000885">
    <property type="protein sequence ID" value="ABX42243.1"/>
    <property type="molecule type" value="Genomic_DNA"/>
</dbReference>
<dbReference type="SMR" id="A9KT32"/>
<dbReference type="STRING" id="357809.Cphy_1874"/>
<dbReference type="CAZy" id="GH65">
    <property type="family name" value="Glycoside Hydrolase Family 65"/>
</dbReference>
<dbReference type="KEGG" id="cpy:Cphy_1874"/>
<dbReference type="eggNOG" id="COG1554">
    <property type="taxonomic scope" value="Bacteria"/>
</dbReference>
<dbReference type="HOGENOM" id="CLU_006285_2_1_9"/>
<dbReference type="OrthoDB" id="9758855at2"/>
<dbReference type="BRENDA" id="2.4.1.279">
    <property type="organism ID" value="10424"/>
</dbReference>
<dbReference type="Proteomes" id="UP000000370">
    <property type="component" value="Chromosome"/>
</dbReference>
<dbReference type="GO" id="GO:0005737">
    <property type="term" value="C:cytoplasm"/>
    <property type="evidence" value="ECO:0007669"/>
    <property type="project" value="UniProtKB-SubCell"/>
</dbReference>
<dbReference type="GO" id="GO:0004645">
    <property type="term" value="F:1,4-alpha-oligoglucan phosphorylase activity"/>
    <property type="evidence" value="ECO:0000314"/>
    <property type="project" value="CACAO"/>
</dbReference>
<dbReference type="GO" id="GO:0030246">
    <property type="term" value="F:carbohydrate binding"/>
    <property type="evidence" value="ECO:0007669"/>
    <property type="project" value="InterPro"/>
</dbReference>
<dbReference type="GO" id="GO:0004553">
    <property type="term" value="F:hydrolase activity, hydrolyzing O-glycosyl compounds"/>
    <property type="evidence" value="ECO:0007669"/>
    <property type="project" value="TreeGrafter"/>
</dbReference>
<dbReference type="GO" id="GO:0005975">
    <property type="term" value="P:carbohydrate metabolic process"/>
    <property type="evidence" value="ECO:0007669"/>
    <property type="project" value="InterPro"/>
</dbReference>
<dbReference type="Gene3D" id="1.50.10.10">
    <property type="match status" value="1"/>
</dbReference>
<dbReference type="Gene3D" id="2.70.98.40">
    <property type="entry name" value="Glycoside hydrolase, family 65, N-terminal domain"/>
    <property type="match status" value="1"/>
</dbReference>
<dbReference type="Gene3D" id="2.60.420.10">
    <property type="entry name" value="Maltose phosphorylase, domain 3"/>
    <property type="match status" value="1"/>
</dbReference>
<dbReference type="InterPro" id="IPR008928">
    <property type="entry name" value="6-hairpin_glycosidase_sf"/>
</dbReference>
<dbReference type="InterPro" id="IPR012341">
    <property type="entry name" value="6hp_glycosidase-like_sf"/>
</dbReference>
<dbReference type="InterPro" id="IPR011013">
    <property type="entry name" value="Gal_mutarotase_sf_dom"/>
</dbReference>
<dbReference type="InterPro" id="IPR005194">
    <property type="entry name" value="Glyco_hydro_65_C"/>
</dbReference>
<dbReference type="InterPro" id="IPR005195">
    <property type="entry name" value="Glyco_hydro_65_M"/>
</dbReference>
<dbReference type="InterPro" id="IPR005196">
    <property type="entry name" value="Glyco_hydro_65_N"/>
</dbReference>
<dbReference type="InterPro" id="IPR037018">
    <property type="entry name" value="Glyco_hydro_65_N_sf"/>
</dbReference>
<dbReference type="InterPro" id="IPR017045">
    <property type="entry name" value="Malt_Pase/Glycosyl_Hdrlase"/>
</dbReference>
<dbReference type="PANTHER" id="PTHR11051">
    <property type="entry name" value="GLYCOSYL HYDROLASE-RELATED"/>
    <property type="match status" value="1"/>
</dbReference>
<dbReference type="PANTHER" id="PTHR11051:SF8">
    <property type="entry name" value="PROTEIN-GLUCOSYLGALACTOSYLHYDROXYLYSINE GLUCOSIDASE"/>
    <property type="match status" value="1"/>
</dbReference>
<dbReference type="Pfam" id="PF03633">
    <property type="entry name" value="Glyco_hydro_65C"/>
    <property type="match status" value="1"/>
</dbReference>
<dbReference type="Pfam" id="PF03632">
    <property type="entry name" value="Glyco_hydro_65m"/>
    <property type="match status" value="1"/>
</dbReference>
<dbReference type="Pfam" id="PF03636">
    <property type="entry name" value="Glyco_hydro_65N"/>
    <property type="match status" value="1"/>
</dbReference>
<dbReference type="PIRSF" id="PIRSF036289">
    <property type="entry name" value="Glycosyl_hydrolase_malt_phosph"/>
    <property type="match status" value="1"/>
</dbReference>
<dbReference type="SUPFAM" id="SSF74650">
    <property type="entry name" value="Galactose mutarotase-like"/>
    <property type="match status" value="1"/>
</dbReference>
<dbReference type="SUPFAM" id="SSF48208">
    <property type="entry name" value="Six-hairpin glycosidases"/>
    <property type="match status" value="1"/>
</dbReference>